<dbReference type="EMBL" id="AE004439">
    <property type="protein sequence ID" value="AAK03863.1"/>
    <property type="molecule type" value="Genomic_DNA"/>
</dbReference>
<dbReference type="RefSeq" id="WP_010907332.1">
    <property type="nucleotide sequence ID" value="NC_002663.1"/>
</dbReference>
<dbReference type="STRING" id="272843.PM1779"/>
<dbReference type="EnsemblBacteria" id="AAK03863">
    <property type="protein sequence ID" value="AAK03863"/>
    <property type="gene ID" value="PM1779"/>
</dbReference>
<dbReference type="KEGG" id="pmu:PM1779"/>
<dbReference type="PATRIC" id="fig|272843.6.peg.1802"/>
<dbReference type="HOGENOM" id="CLU_1925565_0_0_6"/>
<dbReference type="OrthoDB" id="5675328at2"/>
<dbReference type="Proteomes" id="UP000000809">
    <property type="component" value="Chromosome"/>
</dbReference>
<keyword id="KW-1185">Reference proteome</keyword>
<feature type="chain" id="PRO_0000216333" description="Uncharacterized protein PM1779">
    <location>
        <begin position="1"/>
        <end position="136"/>
    </location>
</feature>
<name>Y1779_PASMU</name>
<reference key="1">
    <citation type="journal article" date="2001" name="Proc. Natl. Acad. Sci. U.S.A.">
        <title>Complete genomic sequence of Pasteurella multocida Pm70.</title>
        <authorList>
            <person name="May B.J."/>
            <person name="Zhang Q."/>
            <person name="Li L.L."/>
            <person name="Paustian M.L."/>
            <person name="Whittam T.S."/>
            <person name="Kapur V."/>
        </authorList>
    </citation>
    <scope>NUCLEOTIDE SEQUENCE [LARGE SCALE GENOMIC DNA]</scope>
    <source>
        <strain>Pm70</strain>
    </source>
</reference>
<organism>
    <name type="scientific">Pasteurella multocida (strain Pm70)</name>
    <dbReference type="NCBI Taxonomy" id="272843"/>
    <lineage>
        <taxon>Bacteria</taxon>
        <taxon>Pseudomonadati</taxon>
        <taxon>Pseudomonadota</taxon>
        <taxon>Gammaproteobacteria</taxon>
        <taxon>Pasteurellales</taxon>
        <taxon>Pasteurellaceae</taxon>
        <taxon>Pasteurella</taxon>
    </lineage>
</organism>
<accession>Q9CK55</accession>
<sequence>MRNVKKALSRSVIASSIQGTTKTNGGHRSRHSSGIFLPQIYLSKGNGAYPHTFQKAEFVARATLRNKAHLRTNKGGFHPLVVVVEPLSRLLSVGKFLQNKPTEKIKMKTSQKSTALLAVRSRTPIVFAPAMEVTYA</sequence>
<protein>
    <recommendedName>
        <fullName>Uncharacterized protein PM1779</fullName>
    </recommendedName>
</protein>
<gene>
    <name type="ordered locus">PM1779</name>
</gene>
<proteinExistence type="predicted"/>